<name>NHAB_ALIFM</name>
<sequence length="530" mass="57274">MSISLGNAFIKNFLGKAPDWYKIAILSFLVINPLVFFFVDPFTAGWLLVVEFIFTLAMALKCYPLQPGGLLAIEAIAIGMTSPEQVKHELVANIEVLLLLVFMVAGIYFMKQLLLFIFTKILIGIKSKTALSVAFCFTAAFLSAFLDALTVIAVVISVAVGFYAIYHRVASGQGGSQTHDHTCDSDVDELTREDLEDYRAFLRSLLIHAGVGTALGGVMTMVGEPQNLIIADQAGWMFGEFIIRMLPITAPVFICGILTCIAVEKLGICGYGAKLPENVRKILEDYEAEERKNRTNIDNAKLIIQGLIAVWLIVGLALHLAAVGLIGLSVIILATAFTGVIEEHSMGKAFEEALPFTALLAVFFAVVAVIIDQELFKPIIDAVLAVEDKGAQLALFYVANGVLSMVSDNVFVGTVYINEVKAALMDGVITRDQFDLLAVAINTGTNLPSVATPNGQAAFLFLLTSALAPLIQLSYGRMVWMALPYTIVLALVGMFGIIFFLEPMTAMFYDLGWIAPGTIESATSAISSGH</sequence>
<dbReference type="EMBL" id="CP001139">
    <property type="protein sequence ID" value="ACH66106.1"/>
    <property type="molecule type" value="Genomic_DNA"/>
</dbReference>
<dbReference type="RefSeq" id="WP_012533495.1">
    <property type="nucleotide sequence ID" value="NC_011184.1"/>
</dbReference>
<dbReference type="SMR" id="B5FFH5"/>
<dbReference type="KEGG" id="vfm:VFMJ11_1754"/>
<dbReference type="HOGENOM" id="CLU_041110_0_0_6"/>
<dbReference type="Proteomes" id="UP000001857">
    <property type="component" value="Chromosome I"/>
</dbReference>
<dbReference type="GO" id="GO:0005886">
    <property type="term" value="C:plasma membrane"/>
    <property type="evidence" value="ECO:0007669"/>
    <property type="project" value="UniProtKB-SubCell"/>
</dbReference>
<dbReference type="GO" id="GO:0015385">
    <property type="term" value="F:sodium:proton antiporter activity"/>
    <property type="evidence" value="ECO:0007669"/>
    <property type="project" value="InterPro"/>
</dbReference>
<dbReference type="HAMAP" id="MF_01599">
    <property type="entry name" value="NhaB"/>
    <property type="match status" value="1"/>
</dbReference>
<dbReference type="InterPro" id="IPR004671">
    <property type="entry name" value="Na+/H+_antiporter_NhaB"/>
</dbReference>
<dbReference type="NCBIfam" id="TIGR00774">
    <property type="entry name" value="NhaB"/>
    <property type="match status" value="1"/>
</dbReference>
<dbReference type="NCBIfam" id="NF007093">
    <property type="entry name" value="PRK09547.1"/>
    <property type="match status" value="1"/>
</dbReference>
<dbReference type="PANTHER" id="PTHR43302:SF1">
    <property type="entry name" value="NA(+)_H(+) ANTIPORTER NHAB"/>
    <property type="match status" value="1"/>
</dbReference>
<dbReference type="PANTHER" id="PTHR43302">
    <property type="entry name" value="TRANSPORTER ARSB-RELATED"/>
    <property type="match status" value="1"/>
</dbReference>
<dbReference type="Pfam" id="PF06450">
    <property type="entry name" value="NhaB"/>
    <property type="match status" value="1"/>
</dbReference>
<keyword id="KW-0050">Antiport</keyword>
<keyword id="KW-0997">Cell inner membrane</keyword>
<keyword id="KW-1003">Cell membrane</keyword>
<keyword id="KW-0406">Ion transport</keyword>
<keyword id="KW-0472">Membrane</keyword>
<keyword id="KW-0915">Sodium</keyword>
<keyword id="KW-0739">Sodium transport</keyword>
<keyword id="KW-0812">Transmembrane</keyword>
<keyword id="KW-1133">Transmembrane helix</keyword>
<keyword id="KW-0813">Transport</keyword>
<proteinExistence type="inferred from homology"/>
<organism>
    <name type="scientific">Aliivibrio fischeri (strain MJ11)</name>
    <name type="common">Vibrio fischeri</name>
    <dbReference type="NCBI Taxonomy" id="388396"/>
    <lineage>
        <taxon>Bacteria</taxon>
        <taxon>Pseudomonadati</taxon>
        <taxon>Pseudomonadota</taxon>
        <taxon>Gammaproteobacteria</taxon>
        <taxon>Vibrionales</taxon>
        <taxon>Vibrionaceae</taxon>
        <taxon>Aliivibrio</taxon>
    </lineage>
</organism>
<feature type="chain" id="PRO_1000191548" description="Na(+)/H(+) antiporter NhaB">
    <location>
        <begin position="1"/>
        <end position="530"/>
    </location>
</feature>
<feature type="transmembrane region" description="Helical" evidence="1">
    <location>
        <begin position="13"/>
        <end position="33"/>
    </location>
</feature>
<feature type="transmembrane region" description="Helical" evidence="1">
    <location>
        <begin position="34"/>
        <end position="54"/>
    </location>
</feature>
<feature type="transmembrane region" description="Helical" evidence="1">
    <location>
        <begin position="90"/>
        <end position="110"/>
    </location>
</feature>
<feature type="transmembrane region" description="Helical" evidence="1">
    <location>
        <begin position="121"/>
        <end position="141"/>
    </location>
</feature>
<feature type="transmembrane region" description="Helical" evidence="1">
    <location>
        <begin position="145"/>
        <end position="165"/>
    </location>
</feature>
<feature type="transmembrane region" description="Helical" evidence="1">
    <location>
        <begin position="205"/>
        <end position="225"/>
    </location>
</feature>
<feature type="transmembrane region" description="Helical" evidence="1">
    <location>
        <begin position="241"/>
        <end position="261"/>
    </location>
</feature>
<feature type="transmembrane region" description="Helical" evidence="1">
    <location>
        <begin position="306"/>
        <end position="326"/>
    </location>
</feature>
<feature type="transmembrane region" description="Helical" evidence="1">
    <location>
        <begin position="327"/>
        <end position="347"/>
    </location>
</feature>
<feature type="transmembrane region" description="Helical" evidence="1">
    <location>
        <begin position="351"/>
        <end position="371"/>
    </location>
</feature>
<feature type="transmembrane region" description="Helical" evidence="1">
    <location>
        <begin position="455"/>
        <end position="475"/>
    </location>
</feature>
<feature type="transmembrane region" description="Helical" evidence="1">
    <location>
        <begin position="481"/>
        <end position="501"/>
    </location>
</feature>
<gene>
    <name evidence="1" type="primary">nhaB</name>
    <name type="ordered locus">VFMJ11_1754</name>
</gene>
<comment type="function">
    <text evidence="1">Na(+)/H(+) antiporter that extrudes sodium in exchange for external protons.</text>
</comment>
<comment type="catalytic activity">
    <reaction evidence="1">
        <text>2 Na(+)(in) + 3 H(+)(out) = 2 Na(+)(out) + 3 H(+)(in)</text>
        <dbReference type="Rhea" id="RHEA:29247"/>
        <dbReference type="ChEBI" id="CHEBI:15378"/>
        <dbReference type="ChEBI" id="CHEBI:29101"/>
    </reaction>
    <physiologicalReaction direction="left-to-right" evidence="1">
        <dbReference type="Rhea" id="RHEA:29248"/>
    </physiologicalReaction>
</comment>
<comment type="subcellular location">
    <subcellularLocation>
        <location evidence="1">Cell inner membrane</location>
        <topology evidence="1">Multi-pass membrane protein</topology>
    </subcellularLocation>
</comment>
<comment type="similarity">
    <text evidence="1">Belongs to the NhaB Na(+)/H(+) (TC 2.A.34) antiporter family.</text>
</comment>
<evidence type="ECO:0000255" key="1">
    <source>
        <dbReference type="HAMAP-Rule" id="MF_01599"/>
    </source>
</evidence>
<accession>B5FFH5</accession>
<reference key="1">
    <citation type="submission" date="2008-08" db="EMBL/GenBank/DDBJ databases">
        <title>Complete sequence of Vibrio fischeri strain MJ11.</title>
        <authorList>
            <person name="Mandel M.J."/>
            <person name="Stabb E.V."/>
            <person name="Ruby E.G."/>
            <person name="Ferriera S."/>
            <person name="Johnson J."/>
            <person name="Kravitz S."/>
            <person name="Beeson K."/>
            <person name="Sutton G."/>
            <person name="Rogers Y.-H."/>
            <person name="Friedman R."/>
            <person name="Frazier M."/>
            <person name="Venter J.C."/>
        </authorList>
    </citation>
    <scope>NUCLEOTIDE SEQUENCE [LARGE SCALE GENOMIC DNA]</scope>
    <source>
        <strain>MJ11</strain>
    </source>
</reference>
<protein>
    <recommendedName>
        <fullName evidence="1">Na(+)/H(+) antiporter NhaB</fullName>
    </recommendedName>
    <alternativeName>
        <fullName evidence="1">Sodium/proton antiporter NhaB</fullName>
    </alternativeName>
</protein>